<evidence type="ECO:0000255" key="1"/>
<evidence type="ECO:0000255" key="2">
    <source>
        <dbReference type="PROSITE-ProRule" id="PRU00037"/>
    </source>
</evidence>
<evidence type="ECO:0000256" key="3">
    <source>
        <dbReference type="SAM" id="MobiDB-lite"/>
    </source>
</evidence>
<evidence type="ECO:0000269" key="4">
    <source>
    </source>
</evidence>
<evidence type="ECO:0000303" key="5">
    <source>
    </source>
</evidence>
<evidence type="ECO:0000305" key="6"/>
<evidence type="ECO:0000312" key="7">
    <source>
        <dbReference type="EMBL" id="AAL39453.1"/>
    </source>
</evidence>
<evidence type="ECO:0000312" key="8">
    <source>
        <dbReference type="FlyBase" id="FBgn0030228"/>
    </source>
</evidence>
<evidence type="ECO:0000312" key="9">
    <source>
        <dbReference type="Proteomes" id="UP000000803"/>
    </source>
</evidence>
<gene>
    <name evidence="8" type="primary">BTBD9</name>
    <name evidence="8" type="ORF">CG1826</name>
</gene>
<sequence>MSSQGHHKMSGGGKKGAMEQDYTDVVDLGDRFSADMARLCMNEQYADVEFIVEEERIPAHRVILAARSEYFRALLYGGMAETTQRQIPLEVPLEAFKVLLRYIYSGTLLLSTLDEDSTIDVLGMANQYGFQDLEMAISNYLRQYLALDNVCMILDAARLYNLEELTEVCLMFMDRNAGDLLLHNSFNTLSKESLEEVLRRDCFFAPEVQIFLAVWKWSRFNSNVDFKSVVSYVRLPLMNLEHLLQVVRPSGILDPDKILDAIDERSTSKALPYRAALWPEENVAAETFLSRCIQGECRDALLDGDVTTYDMENGYTRHCITDSKDAGIVVELGTFCMINHIRMLLWDRDSRAYSYYVEVSGDQQHWDRVVDYSDYHCRSWQYLYFEARPVRFIRLVGTQNTVNRVFHVVGLEAMHTAKVPRLVNHFVAPKTNVATVEMSAIVTDGVSRTRNALINGDYVRYDWDSGYTCHQLGSGEIVVRLGQPYYLGSMRLLLWDCDDRTYSFYIEISTNRKEWQMVVDRRNDRTRSWQNFHFTPRPVVYIRIVGTRNTANEIFHCVHLECPTQDKNYLKKIADMEKEREKREKEKKTAKTDDDNIASTSGSSLASGHAESPSTSSSSSQSVLRSIHWPPQTREVAVAPLTPPALSPPGTPALPAPLTPATSSPHNNHEQNQPSNISADASHHTSPSSRSNPSPSLSRSRSQSAELEPVPPLVELDTRETL</sequence>
<comment type="function">
    <text evidence="4">Essential for the homeostatic regulation of sleep and motor activity, by depressing hyperactivity and wakefulness. May function, at least in part, by ensuring dopamine biosynthesis.</text>
</comment>
<comment type="subcellular location">
    <subcellularLocation>
        <location evidence="4">Cytoplasm</location>
    </subcellularLocation>
    <text evidence="4">Localized to distinct puncta in neuronal cytoplasm.</text>
</comment>
<comment type="tissue specificity">
    <text evidence="4">Detected in the brain (at protein level).</text>
</comment>
<comment type="developmental stage">
    <text evidence="4">Expressed in larval muscles.</text>
</comment>
<comment type="disruption phenotype">
    <text evidence="4">Adults display increased motor activity during locomotion, fragmented sleep and a decreased lifespan. Walking speed is not effected however flies spend more time moving with slightly fewer pauses resulting in longer uninterrupted bouts of walking. The total duration of sleep is not effected but average sleep bout length is decreased, the number of sleep bouts is increased and the amount of wake after sleep onset (WASO) is also increased. Dopamine levels are decreased by 50%. No effect on flight or climbing (negative geotaxis). RNAi-mediated knockdown in a large subset of dopaminergic neurons also results in fragmented sleep.</text>
</comment>
<name>BTBD9_DROME</name>
<organism evidence="9">
    <name type="scientific">Drosophila melanogaster</name>
    <name type="common">Fruit fly</name>
    <dbReference type="NCBI Taxonomy" id="7227"/>
    <lineage>
        <taxon>Eukaryota</taxon>
        <taxon>Metazoa</taxon>
        <taxon>Ecdysozoa</taxon>
        <taxon>Arthropoda</taxon>
        <taxon>Hexapoda</taxon>
        <taxon>Insecta</taxon>
        <taxon>Pterygota</taxon>
        <taxon>Neoptera</taxon>
        <taxon>Endopterygota</taxon>
        <taxon>Diptera</taxon>
        <taxon>Brachycera</taxon>
        <taxon>Muscomorpha</taxon>
        <taxon>Ephydroidea</taxon>
        <taxon>Drosophilidae</taxon>
        <taxon>Drosophila</taxon>
        <taxon>Sophophora</taxon>
    </lineage>
</organism>
<reference evidence="9" key="1">
    <citation type="journal article" date="2000" name="Science">
        <title>The genome sequence of Drosophila melanogaster.</title>
        <authorList>
            <person name="Adams M.D."/>
            <person name="Celniker S.E."/>
            <person name="Holt R.A."/>
            <person name="Evans C.A."/>
            <person name="Gocayne J.D."/>
            <person name="Amanatides P.G."/>
            <person name="Scherer S.E."/>
            <person name="Li P.W."/>
            <person name="Hoskins R.A."/>
            <person name="Galle R.F."/>
            <person name="George R.A."/>
            <person name="Lewis S.E."/>
            <person name="Richards S."/>
            <person name="Ashburner M."/>
            <person name="Henderson S.N."/>
            <person name="Sutton G.G."/>
            <person name="Wortman J.R."/>
            <person name="Yandell M.D."/>
            <person name="Zhang Q."/>
            <person name="Chen L.X."/>
            <person name="Brandon R.C."/>
            <person name="Rogers Y.-H.C."/>
            <person name="Blazej R.G."/>
            <person name="Champe M."/>
            <person name="Pfeiffer B.D."/>
            <person name="Wan K.H."/>
            <person name="Doyle C."/>
            <person name="Baxter E.G."/>
            <person name="Helt G."/>
            <person name="Nelson C.R."/>
            <person name="Miklos G.L.G."/>
            <person name="Abril J.F."/>
            <person name="Agbayani A."/>
            <person name="An H.-J."/>
            <person name="Andrews-Pfannkoch C."/>
            <person name="Baldwin D."/>
            <person name="Ballew R.M."/>
            <person name="Basu A."/>
            <person name="Baxendale J."/>
            <person name="Bayraktaroglu L."/>
            <person name="Beasley E.M."/>
            <person name="Beeson K.Y."/>
            <person name="Benos P.V."/>
            <person name="Berman B.P."/>
            <person name="Bhandari D."/>
            <person name="Bolshakov S."/>
            <person name="Borkova D."/>
            <person name="Botchan M.R."/>
            <person name="Bouck J."/>
            <person name="Brokstein P."/>
            <person name="Brottier P."/>
            <person name="Burtis K.C."/>
            <person name="Busam D.A."/>
            <person name="Butler H."/>
            <person name="Cadieu E."/>
            <person name="Center A."/>
            <person name="Chandra I."/>
            <person name="Cherry J.M."/>
            <person name="Cawley S."/>
            <person name="Dahlke C."/>
            <person name="Davenport L.B."/>
            <person name="Davies P."/>
            <person name="de Pablos B."/>
            <person name="Delcher A."/>
            <person name="Deng Z."/>
            <person name="Mays A.D."/>
            <person name="Dew I."/>
            <person name="Dietz S.M."/>
            <person name="Dodson K."/>
            <person name="Doup L.E."/>
            <person name="Downes M."/>
            <person name="Dugan-Rocha S."/>
            <person name="Dunkov B.C."/>
            <person name="Dunn P."/>
            <person name="Durbin K.J."/>
            <person name="Evangelista C.C."/>
            <person name="Ferraz C."/>
            <person name="Ferriera S."/>
            <person name="Fleischmann W."/>
            <person name="Fosler C."/>
            <person name="Gabrielian A.E."/>
            <person name="Garg N.S."/>
            <person name="Gelbart W.M."/>
            <person name="Glasser K."/>
            <person name="Glodek A."/>
            <person name="Gong F."/>
            <person name="Gorrell J.H."/>
            <person name="Gu Z."/>
            <person name="Guan P."/>
            <person name="Harris M."/>
            <person name="Harris N.L."/>
            <person name="Harvey D.A."/>
            <person name="Heiman T.J."/>
            <person name="Hernandez J.R."/>
            <person name="Houck J."/>
            <person name="Hostin D."/>
            <person name="Houston K.A."/>
            <person name="Howland T.J."/>
            <person name="Wei M.-H."/>
            <person name="Ibegwam C."/>
            <person name="Jalali M."/>
            <person name="Kalush F."/>
            <person name="Karpen G.H."/>
            <person name="Ke Z."/>
            <person name="Kennison J.A."/>
            <person name="Ketchum K.A."/>
            <person name="Kimmel B.E."/>
            <person name="Kodira C.D."/>
            <person name="Kraft C.L."/>
            <person name="Kravitz S."/>
            <person name="Kulp D."/>
            <person name="Lai Z."/>
            <person name="Lasko P."/>
            <person name="Lei Y."/>
            <person name="Levitsky A.A."/>
            <person name="Li J.H."/>
            <person name="Li Z."/>
            <person name="Liang Y."/>
            <person name="Lin X."/>
            <person name="Liu X."/>
            <person name="Mattei B."/>
            <person name="McIntosh T.C."/>
            <person name="McLeod M.P."/>
            <person name="McPherson D."/>
            <person name="Merkulov G."/>
            <person name="Milshina N.V."/>
            <person name="Mobarry C."/>
            <person name="Morris J."/>
            <person name="Moshrefi A."/>
            <person name="Mount S.M."/>
            <person name="Moy M."/>
            <person name="Murphy B."/>
            <person name="Murphy L."/>
            <person name="Muzny D.M."/>
            <person name="Nelson D.L."/>
            <person name="Nelson D.R."/>
            <person name="Nelson K.A."/>
            <person name="Nixon K."/>
            <person name="Nusskern D.R."/>
            <person name="Pacleb J.M."/>
            <person name="Palazzolo M."/>
            <person name="Pittman G.S."/>
            <person name="Pan S."/>
            <person name="Pollard J."/>
            <person name="Puri V."/>
            <person name="Reese M.G."/>
            <person name="Reinert K."/>
            <person name="Remington K."/>
            <person name="Saunders R.D.C."/>
            <person name="Scheeler F."/>
            <person name="Shen H."/>
            <person name="Shue B.C."/>
            <person name="Siden-Kiamos I."/>
            <person name="Simpson M."/>
            <person name="Skupski M.P."/>
            <person name="Smith T.J."/>
            <person name="Spier E."/>
            <person name="Spradling A.C."/>
            <person name="Stapleton M."/>
            <person name="Strong R."/>
            <person name="Sun E."/>
            <person name="Svirskas R."/>
            <person name="Tector C."/>
            <person name="Turner R."/>
            <person name="Venter E."/>
            <person name="Wang A.H."/>
            <person name="Wang X."/>
            <person name="Wang Z.-Y."/>
            <person name="Wassarman D.A."/>
            <person name="Weinstock G.M."/>
            <person name="Weissenbach J."/>
            <person name="Williams S.M."/>
            <person name="Woodage T."/>
            <person name="Worley K.C."/>
            <person name="Wu D."/>
            <person name="Yang S."/>
            <person name="Yao Q.A."/>
            <person name="Ye J."/>
            <person name="Yeh R.-F."/>
            <person name="Zaveri J.S."/>
            <person name="Zhan M."/>
            <person name="Zhang G."/>
            <person name="Zhao Q."/>
            <person name="Zheng L."/>
            <person name="Zheng X.H."/>
            <person name="Zhong F.N."/>
            <person name="Zhong W."/>
            <person name="Zhou X."/>
            <person name="Zhu S.C."/>
            <person name="Zhu X."/>
            <person name="Smith H.O."/>
            <person name="Gibbs R.A."/>
            <person name="Myers E.W."/>
            <person name="Rubin G.M."/>
            <person name="Venter J.C."/>
        </authorList>
    </citation>
    <scope>NUCLEOTIDE SEQUENCE [LARGE SCALE GENOMIC DNA]</scope>
    <source>
        <strain evidence="9">Berkeley</strain>
    </source>
</reference>
<reference evidence="9" key="2">
    <citation type="journal article" date="2002" name="Genome Biol.">
        <title>Annotation of the Drosophila melanogaster euchromatic genome: a systematic review.</title>
        <authorList>
            <person name="Misra S."/>
            <person name="Crosby M.A."/>
            <person name="Mungall C.J."/>
            <person name="Matthews B.B."/>
            <person name="Campbell K.S."/>
            <person name="Hradecky P."/>
            <person name="Huang Y."/>
            <person name="Kaminker J.S."/>
            <person name="Millburn G.H."/>
            <person name="Prochnik S.E."/>
            <person name="Smith C.D."/>
            <person name="Tupy J.L."/>
            <person name="Whitfield E.J."/>
            <person name="Bayraktaroglu L."/>
            <person name="Berman B.P."/>
            <person name="Bettencourt B.R."/>
            <person name="Celniker S.E."/>
            <person name="de Grey A.D.N.J."/>
            <person name="Drysdale R.A."/>
            <person name="Harris N.L."/>
            <person name="Richter J."/>
            <person name="Russo S."/>
            <person name="Schroeder A.J."/>
            <person name="Shu S.Q."/>
            <person name="Stapleton M."/>
            <person name="Yamada C."/>
            <person name="Ashburner M."/>
            <person name="Gelbart W.M."/>
            <person name="Rubin G.M."/>
            <person name="Lewis S.E."/>
        </authorList>
    </citation>
    <scope>GENOME REANNOTATION</scope>
    <source>
        <strain>Berkeley</strain>
    </source>
</reference>
<reference evidence="7" key="3">
    <citation type="journal article" date="2002" name="Genome Biol.">
        <title>A Drosophila full-length cDNA resource.</title>
        <authorList>
            <person name="Stapleton M."/>
            <person name="Carlson J.W."/>
            <person name="Brokstein P."/>
            <person name="Yu C."/>
            <person name="Champe M."/>
            <person name="George R.A."/>
            <person name="Guarin H."/>
            <person name="Kronmiller B."/>
            <person name="Pacleb J.M."/>
            <person name="Park S."/>
            <person name="Wan K.H."/>
            <person name="Rubin G.M."/>
            <person name="Celniker S.E."/>
        </authorList>
    </citation>
    <scope>NUCLEOTIDE SEQUENCE [LARGE SCALE MRNA]</scope>
    <source>
        <strain>Berkeley</strain>
        <tissue>Embryo</tissue>
    </source>
</reference>
<reference evidence="6" key="4">
    <citation type="journal article" date="2012" name="Curr. Biol.">
        <title>Sleep fragmentation and motor restlessness in a Drosophila model of Restless Legs Syndrome.</title>
        <authorList>
            <person name="Freeman A."/>
            <person name="Pranski E."/>
            <person name="Miller R.D."/>
            <person name="Radmard S."/>
            <person name="Bernhard D."/>
            <person name="Jinnah H.A."/>
            <person name="Betarbet R."/>
            <person name="Rye D.B."/>
            <person name="Sanyal S."/>
        </authorList>
    </citation>
    <scope>FUNCTION</scope>
    <scope>SUBCELLULAR LOCATION</scope>
    <scope>TISSUE SPECIFICITY</scope>
    <scope>DEVELOPMENTAL STAGE</scope>
    <scope>DISRUPTION PHENOTYPE</scope>
</reference>
<proteinExistence type="evidence at protein level"/>
<feature type="chain" id="PRO_0000438108" description="BTB/POZ domain-containing protein 9">
    <location>
        <begin position="1"/>
        <end position="722"/>
    </location>
</feature>
<feature type="domain" description="BTB" evidence="2">
    <location>
        <begin position="46"/>
        <end position="112"/>
    </location>
</feature>
<feature type="domain" description="BACK" evidence="1">
    <location>
        <begin position="151"/>
        <end position="247"/>
    </location>
</feature>
<feature type="region of interest" description="Disordered" evidence="3">
    <location>
        <begin position="577"/>
        <end position="626"/>
    </location>
</feature>
<feature type="region of interest" description="Disordered" evidence="3">
    <location>
        <begin position="640"/>
        <end position="722"/>
    </location>
</feature>
<feature type="coiled-coil region" evidence="1">
    <location>
        <begin position="565"/>
        <end position="593"/>
    </location>
</feature>
<feature type="compositionally biased region" description="Basic and acidic residues" evidence="3">
    <location>
        <begin position="577"/>
        <end position="594"/>
    </location>
</feature>
<feature type="compositionally biased region" description="Polar residues" evidence="3">
    <location>
        <begin position="597"/>
        <end position="606"/>
    </location>
</feature>
<feature type="compositionally biased region" description="Low complexity" evidence="3">
    <location>
        <begin position="607"/>
        <end position="626"/>
    </location>
</feature>
<feature type="compositionally biased region" description="Pro residues" evidence="3">
    <location>
        <begin position="641"/>
        <end position="658"/>
    </location>
</feature>
<feature type="compositionally biased region" description="Polar residues" evidence="3">
    <location>
        <begin position="670"/>
        <end position="679"/>
    </location>
</feature>
<feature type="compositionally biased region" description="Low complexity" evidence="3">
    <location>
        <begin position="686"/>
        <end position="704"/>
    </location>
</feature>
<accession>Q9W2S3</accession>
<keyword id="KW-0175">Coiled coil</keyword>
<keyword id="KW-0963">Cytoplasm</keyword>
<keyword id="KW-1185">Reference proteome</keyword>
<protein>
    <recommendedName>
        <fullName evidence="5">BTB/POZ domain-containing protein 9</fullName>
    </recommendedName>
</protein>
<dbReference type="EMBL" id="AE014298">
    <property type="protein sequence ID" value="AAF46616.1"/>
    <property type="molecule type" value="Genomic_DNA"/>
</dbReference>
<dbReference type="EMBL" id="AE014298">
    <property type="protein sequence ID" value="AGB95274.1"/>
    <property type="molecule type" value="Genomic_DNA"/>
</dbReference>
<dbReference type="EMBL" id="AY069308">
    <property type="protein sequence ID" value="AAL39453.1"/>
    <property type="molecule type" value="mRNA"/>
</dbReference>
<dbReference type="RefSeq" id="NP_001259431.1">
    <property type="nucleotide sequence ID" value="NM_001272502.1"/>
</dbReference>
<dbReference type="RefSeq" id="NP_572649.1">
    <property type="nucleotide sequence ID" value="NM_132421.3"/>
</dbReference>
<dbReference type="SMR" id="Q9W2S3"/>
<dbReference type="FunCoup" id="Q9W2S3">
    <property type="interactions" value="1386"/>
</dbReference>
<dbReference type="STRING" id="7227.FBpp0306532"/>
<dbReference type="GlyGen" id="Q9W2S3">
    <property type="glycosylation" value="1 site"/>
</dbReference>
<dbReference type="PaxDb" id="7227-FBpp0071426"/>
<dbReference type="EnsemblMetazoa" id="FBtr0071497">
    <property type="protein sequence ID" value="FBpp0071426"/>
    <property type="gene ID" value="FBgn0030228"/>
</dbReference>
<dbReference type="EnsemblMetazoa" id="FBtr0334456">
    <property type="protein sequence ID" value="FBpp0306532"/>
    <property type="gene ID" value="FBgn0030228"/>
</dbReference>
<dbReference type="GeneID" id="32000"/>
<dbReference type="KEGG" id="dme:Dmel_CG1826"/>
<dbReference type="UCSC" id="CG1826-RA">
    <property type="organism name" value="d. melanogaster"/>
</dbReference>
<dbReference type="AGR" id="FB:FBgn0030228"/>
<dbReference type="CTD" id="114781"/>
<dbReference type="FlyBase" id="FBgn0030228">
    <property type="gene designation" value="BTBD9"/>
</dbReference>
<dbReference type="VEuPathDB" id="VectorBase:FBgn0030228"/>
<dbReference type="eggNOG" id="KOG4350">
    <property type="taxonomic scope" value="Eukaryota"/>
</dbReference>
<dbReference type="GeneTree" id="ENSGT00940000169300"/>
<dbReference type="HOGENOM" id="CLU_004253_0_2_1"/>
<dbReference type="InParanoid" id="Q9W2S3"/>
<dbReference type="OMA" id="LCMINHI"/>
<dbReference type="OrthoDB" id="9997739at2759"/>
<dbReference type="PhylomeDB" id="Q9W2S3"/>
<dbReference type="BioGRID-ORCS" id="32000">
    <property type="hits" value="0 hits in 1 CRISPR screen"/>
</dbReference>
<dbReference type="ChiTaRS" id="BTBD9">
    <property type="organism name" value="fly"/>
</dbReference>
<dbReference type="GenomeRNAi" id="32000"/>
<dbReference type="PRO" id="PR:Q9W2S3"/>
<dbReference type="Proteomes" id="UP000000803">
    <property type="component" value="Chromosome X"/>
</dbReference>
<dbReference type="Bgee" id="FBgn0030228">
    <property type="expression patterns" value="Expressed in enterocyte of anterior adult midgut epithelium in digestive tract and 108 other cell types or tissues"/>
</dbReference>
<dbReference type="GO" id="GO:0005737">
    <property type="term" value="C:cytoplasm"/>
    <property type="evidence" value="ECO:0000314"/>
    <property type="project" value="FlyBase"/>
</dbReference>
<dbReference type="GO" id="GO:0008344">
    <property type="term" value="P:adult locomotory behavior"/>
    <property type="evidence" value="ECO:0000315"/>
    <property type="project" value="FlyBase"/>
</dbReference>
<dbReference type="GO" id="GO:0048512">
    <property type="term" value="P:circadian behavior"/>
    <property type="evidence" value="ECO:0000318"/>
    <property type="project" value="GO_Central"/>
</dbReference>
<dbReference type="GO" id="GO:0050804">
    <property type="term" value="P:modulation of chemical synaptic transmission"/>
    <property type="evidence" value="ECO:0000318"/>
    <property type="project" value="GO_Central"/>
</dbReference>
<dbReference type="GO" id="GO:0045938">
    <property type="term" value="P:positive regulation of circadian sleep/wake cycle, sleep"/>
    <property type="evidence" value="ECO:0000315"/>
    <property type="project" value="FlyBase"/>
</dbReference>
<dbReference type="GO" id="GO:0032225">
    <property type="term" value="P:regulation of synaptic transmission, dopaminergic"/>
    <property type="evidence" value="ECO:0000315"/>
    <property type="project" value="FlyBase"/>
</dbReference>
<dbReference type="CDD" id="cd14822">
    <property type="entry name" value="BACK_BTBD9"/>
    <property type="match status" value="1"/>
</dbReference>
<dbReference type="CDD" id="cd18287">
    <property type="entry name" value="BTB_POZ_BTBD9"/>
    <property type="match status" value="1"/>
</dbReference>
<dbReference type="FunFam" id="1.25.40.420:FF:000005">
    <property type="entry name" value="BTB/POZ domain-containing protein 9"/>
    <property type="match status" value="1"/>
</dbReference>
<dbReference type="FunFam" id="2.60.120.260:FF:000051">
    <property type="entry name" value="BTB/POZ domain-containing protein 9"/>
    <property type="match status" value="2"/>
</dbReference>
<dbReference type="FunFam" id="3.30.710.10:FF:000042">
    <property type="entry name" value="BTB/POZ domain-containing protein 9"/>
    <property type="match status" value="1"/>
</dbReference>
<dbReference type="Gene3D" id="1.25.40.420">
    <property type="match status" value="1"/>
</dbReference>
<dbReference type="Gene3D" id="2.60.120.260">
    <property type="entry name" value="Galactose-binding domain-like"/>
    <property type="match status" value="2"/>
</dbReference>
<dbReference type="Gene3D" id="3.30.710.10">
    <property type="entry name" value="Potassium Channel Kv1.1, Chain A"/>
    <property type="match status" value="1"/>
</dbReference>
<dbReference type="InterPro" id="IPR011705">
    <property type="entry name" value="BACK"/>
</dbReference>
<dbReference type="InterPro" id="IPR000210">
    <property type="entry name" value="BTB/POZ_dom"/>
</dbReference>
<dbReference type="InterPro" id="IPR052407">
    <property type="entry name" value="BTB_POZ_domain_cont_9"/>
</dbReference>
<dbReference type="InterPro" id="IPR034091">
    <property type="entry name" value="BTBD9_BACK-like_dom"/>
</dbReference>
<dbReference type="InterPro" id="IPR000421">
    <property type="entry name" value="FA58C"/>
</dbReference>
<dbReference type="InterPro" id="IPR008979">
    <property type="entry name" value="Galactose-bd-like_sf"/>
</dbReference>
<dbReference type="InterPro" id="IPR011333">
    <property type="entry name" value="SKP1/BTB/POZ_sf"/>
</dbReference>
<dbReference type="PANTHER" id="PTHR46306">
    <property type="entry name" value="BTB/POZ DOMAIN-CONTAINING PROTEIN 9"/>
    <property type="match status" value="1"/>
</dbReference>
<dbReference type="PANTHER" id="PTHR46306:SF1">
    <property type="entry name" value="BTB_POZ DOMAIN-CONTAINING PROTEIN 9"/>
    <property type="match status" value="1"/>
</dbReference>
<dbReference type="Pfam" id="PF07707">
    <property type="entry name" value="BACK"/>
    <property type="match status" value="1"/>
</dbReference>
<dbReference type="Pfam" id="PF00651">
    <property type="entry name" value="BTB"/>
    <property type="match status" value="1"/>
</dbReference>
<dbReference type="Pfam" id="PF00754">
    <property type="entry name" value="F5_F8_type_C"/>
    <property type="match status" value="1"/>
</dbReference>
<dbReference type="SMART" id="SM00875">
    <property type="entry name" value="BACK"/>
    <property type="match status" value="1"/>
</dbReference>
<dbReference type="SMART" id="SM00225">
    <property type="entry name" value="BTB"/>
    <property type="match status" value="1"/>
</dbReference>
<dbReference type="SUPFAM" id="SSF49785">
    <property type="entry name" value="Galactose-binding domain-like"/>
    <property type="match status" value="2"/>
</dbReference>
<dbReference type="SUPFAM" id="SSF54695">
    <property type="entry name" value="POZ domain"/>
    <property type="match status" value="1"/>
</dbReference>
<dbReference type="PROSITE" id="PS50097">
    <property type="entry name" value="BTB"/>
    <property type="match status" value="1"/>
</dbReference>